<feature type="chain" id="PRO_0000152826" description="Phosphomethylpyrimidine synthase">
    <location>
        <begin position="1"/>
        <end position="626"/>
    </location>
</feature>
<feature type="region of interest" description="Disordered" evidence="2">
    <location>
        <begin position="1"/>
        <end position="22"/>
    </location>
</feature>
<feature type="compositionally biased region" description="Polar residues" evidence="2">
    <location>
        <begin position="10"/>
        <end position="22"/>
    </location>
</feature>
<feature type="binding site" evidence="1">
    <location>
        <position position="232"/>
    </location>
    <ligand>
        <name>substrate</name>
    </ligand>
</feature>
<feature type="binding site" evidence="1">
    <location>
        <position position="261"/>
    </location>
    <ligand>
        <name>substrate</name>
    </ligand>
</feature>
<feature type="binding site" evidence="1">
    <location>
        <position position="290"/>
    </location>
    <ligand>
        <name>substrate</name>
    </ligand>
</feature>
<feature type="binding site" evidence="1">
    <location>
        <position position="326"/>
    </location>
    <ligand>
        <name>substrate</name>
    </ligand>
</feature>
<feature type="binding site" evidence="1">
    <location>
        <begin position="346"/>
        <end position="348"/>
    </location>
    <ligand>
        <name>substrate</name>
    </ligand>
</feature>
<feature type="binding site" evidence="1">
    <location>
        <begin position="387"/>
        <end position="390"/>
    </location>
    <ligand>
        <name>substrate</name>
    </ligand>
</feature>
<feature type="binding site" evidence="1">
    <location>
        <position position="426"/>
    </location>
    <ligand>
        <name>substrate</name>
    </ligand>
</feature>
<feature type="binding site" evidence="1">
    <location>
        <position position="430"/>
    </location>
    <ligand>
        <name>Zn(2+)</name>
        <dbReference type="ChEBI" id="CHEBI:29105"/>
    </ligand>
</feature>
<feature type="binding site" evidence="1">
    <location>
        <position position="453"/>
    </location>
    <ligand>
        <name>substrate</name>
    </ligand>
</feature>
<feature type="binding site" evidence="1">
    <location>
        <position position="494"/>
    </location>
    <ligand>
        <name>Zn(2+)</name>
        <dbReference type="ChEBI" id="CHEBI:29105"/>
    </ligand>
</feature>
<feature type="binding site" evidence="1">
    <location>
        <position position="574"/>
    </location>
    <ligand>
        <name>[4Fe-4S] cluster</name>
        <dbReference type="ChEBI" id="CHEBI:49883"/>
        <note>4Fe-4S-S-AdoMet</note>
    </ligand>
</feature>
<feature type="binding site" evidence="1">
    <location>
        <position position="577"/>
    </location>
    <ligand>
        <name>[4Fe-4S] cluster</name>
        <dbReference type="ChEBI" id="CHEBI:49883"/>
        <note>4Fe-4S-S-AdoMet</note>
    </ligand>
</feature>
<feature type="binding site" evidence="1">
    <location>
        <position position="582"/>
    </location>
    <ligand>
        <name>[4Fe-4S] cluster</name>
        <dbReference type="ChEBI" id="CHEBI:49883"/>
        <note>4Fe-4S-S-AdoMet</note>
    </ligand>
</feature>
<proteinExistence type="inferred from homology"/>
<sequence length="626" mass="69727">MTKQEKAINLSESAQVDQQSVQPFPRSRKVYVEGSRPDIRVPMREISLDDTPTDFGGESNAPVLVYDTSGPYTDPDVIIDVRKGLPDVRSAWIEARGDTERLEGLSSDFGQQRLNDAELAKLRFAHVRNPRRAKAGANVSQMHYARQGIITAEMEYVAIRENMKLQEARAAGLLNEQHAGHSFGANIPKEITPEFVRQEIARGRAIIPANINHPEVEPMIIGRNFLVKINGNIGNSALGSSIEEEVAKLTWGIRWGSDTVMDLSTGKHIHETREWIIRNSPVPIGTVPIYQALEKVNGVAEDLTWELFRDTLIEQAEQGVDYFTIHAGVLLRYVPLTAKRVTGIVSRGGSIMAKWCLAHHKENFLYTHFDEICEIMKAYDVSFSLGDGLRPGSIADANDAAQFGELETLGELTKIAWKHDVQCMIEGPGHVPMQLIKENMDKQLECCDEAPFYTLGPLTTDIAPGYDHITSGIGAAMIGWFGCAMLCYVTPKEHLGLPNKDDVKTGIITYKIAAHAADLAKGHPGAQIRDNALSKARFEFRWEDQFNLGLDPDTARAFHDETLPKESAKVAHFCSMCGPKFCSMKITQEVREYAAKIEAVDVTVEQGMREQAERFRQEGSQLYHKV</sequence>
<comment type="function">
    <text evidence="1">Catalyzes the synthesis of the hydroxymethylpyrimidine phosphate (HMP-P) moiety of thiamine from aminoimidazole ribotide (AIR) in a radical S-adenosyl-L-methionine (SAM)-dependent reaction.</text>
</comment>
<comment type="catalytic activity">
    <reaction evidence="1">
        <text>5-amino-1-(5-phospho-beta-D-ribosyl)imidazole + S-adenosyl-L-methionine = 4-amino-2-methyl-5-(phosphooxymethyl)pyrimidine + CO + 5'-deoxyadenosine + formate + L-methionine + 3 H(+)</text>
        <dbReference type="Rhea" id="RHEA:24840"/>
        <dbReference type="ChEBI" id="CHEBI:15378"/>
        <dbReference type="ChEBI" id="CHEBI:15740"/>
        <dbReference type="ChEBI" id="CHEBI:17245"/>
        <dbReference type="ChEBI" id="CHEBI:17319"/>
        <dbReference type="ChEBI" id="CHEBI:57844"/>
        <dbReference type="ChEBI" id="CHEBI:58354"/>
        <dbReference type="ChEBI" id="CHEBI:59789"/>
        <dbReference type="ChEBI" id="CHEBI:137981"/>
        <dbReference type="EC" id="4.1.99.17"/>
    </reaction>
</comment>
<comment type="cofactor">
    <cofactor evidence="1">
        <name>[4Fe-4S] cluster</name>
        <dbReference type="ChEBI" id="CHEBI:49883"/>
    </cofactor>
    <text evidence="1">Binds 1 [4Fe-4S] cluster per subunit. The cluster is coordinated with 3 cysteines and an exchangeable S-adenosyl-L-methionine.</text>
</comment>
<comment type="pathway">
    <text evidence="1">Cofactor biosynthesis; thiamine diphosphate biosynthesis.</text>
</comment>
<comment type="subunit">
    <text evidence="1">Homodimer.</text>
</comment>
<comment type="similarity">
    <text evidence="1">Belongs to the ThiC family.</text>
</comment>
<keyword id="KW-0004">4Fe-4S</keyword>
<keyword id="KW-0408">Iron</keyword>
<keyword id="KW-0411">Iron-sulfur</keyword>
<keyword id="KW-0456">Lyase</keyword>
<keyword id="KW-0479">Metal-binding</keyword>
<keyword id="KW-1185">Reference proteome</keyword>
<keyword id="KW-0949">S-adenosyl-L-methionine</keyword>
<keyword id="KW-0784">Thiamine biosynthesis</keyword>
<keyword id="KW-0862">Zinc</keyword>
<name>THIC_PSEPK</name>
<protein>
    <recommendedName>
        <fullName evidence="1">Phosphomethylpyrimidine synthase</fullName>
        <ecNumber evidence="1">4.1.99.17</ecNumber>
    </recommendedName>
    <alternativeName>
        <fullName evidence="1">Hydroxymethylpyrimidine phosphate synthase</fullName>
        <shortName evidence="1">HMP-P synthase</shortName>
        <shortName evidence="1">HMP-phosphate synthase</shortName>
        <shortName evidence="1">HMPP synthase</shortName>
    </alternativeName>
    <alternativeName>
        <fullName evidence="1">Thiamine biosynthesis protein ThiC</fullName>
    </alternativeName>
</protein>
<accession>Q88DA5</accession>
<gene>
    <name evidence="1" type="primary">thiC</name>
    <name type="ordered locus">PP_4922</name>
</gene>
<reference key="1">
    <citation type="journal article" date="2002" name="Environ. Microbiol.">
        <title>Complete genome sequence and comparative analysis of the metabolically versatile Pseudomonas putida KT2440.</title>
        <authorList>
            <person name="Nelson K.E."/>
            <person name="Weinel C."/>
            <person name="Paulsen I.T."/>
            <person name="Dodson R.J."/>
            <person name="Hilbert H."/>
            <person name="Martins dos Santos V.A.P."/>
            <person name="Fouts D.E."/>
            <person name="Gill S.R."/>
            <person name="Pop M."/>
            <person name="Holmes M."/>
            <person name="Brinkac L.M."/>
            <person name="Beanan M.J."/>
            <person name="DeBoy R.T."/>
            <person name="Daugherty S.C."/>
            <person name="Kolonay J.F."/>
            <person name="Madupu R."/>
            <person name="Nelson W.C."/>
            <person name="White O."/>
            <person name="Peterson J.D."/>
            <person name="Khouri H.M."/>
            <person name="Hance I."/>
            <person name="Chris Lee P."/>
            <person name="Holtzapple E.K."/>
            <person name="Scanlan D."/>
            <person name="Tran K."/>
            <person name="Moazzez A."/>
            <person name="Utterback T.R."/>
            <person name="Rizzo M."/>
            <person name="Lee K."/>
            <person name="Kosack D."/>
            <person name="Moestl D."/>
            <person name="Wedler H."/>
            <person name="Lauber J."/>
            <person name="Stjepandic D."/>
            <person name="Hoheisel J."/>
            <person name="Straetz M."/>
            <person name="Heim S."/>
            <person name="Kiewitz C."/>
            <person name="Eisen J.A."/>
            <person name="Timmis K.N."/>
            <person name="Duesterhoeft A."/>
            <person name="Tuemmler B."/>
            <person name="Fraser C.M."/>
        </authorList>
    </citation>
    <scope>NUCLEOTIDE SEQUENCE [LARGE SCALE GENOMIC DNA]</scope>
    <source>
        <strain>ATCC 47054 / DSM 6125 / CFBP 8728 / NCIMB 11950 / KT2440</strain>
    </source>
</reference>
<evidence type="ECO:0000255" key="1">
    <source>
        <dbReference type="HAMAP-Rule" id="MF_00089"/>
    </source>
</evidence>
<evidence type="ECO:0000256" key="2">
    <source>
        <dbReference type="SAM" id="MobiDB-lite"/>
    </source>
</evidence>
<dbReference type="EC" id="4.1.99.17" evidence="1"/>
<dbReference type="EMBL" id="AE015451">
    <property type="protein sequence ID" value="AAN70489.1"/>
    <property type="molecule type" value="Genomic_DNA"/>
</dbReference>
<dbReference type="RefSeq" id="NP_747025.1">
    <property type="nucleotide sequence ID" value="NC_002947.4"/>
</dbReference>
<dbReference type="RefSeq" id="WP_010955502.1">
    <property type="nucleotide sequence ID" value="NZ_CP169744.1"/>
</dbReference>
<dbReference type="SMR" id="Q88DA5"/>
<dbReference type="STRING" id="160488.PP_4922"/>
<dbReference type="PaxDb" id="160488-PP_4922"/>
<dbReference type="GeneID" id="83682654"/>
<dbReference type="KEGG" id="ppu:PP_4922"/>
<dbReference type="PATRIC" id="fig|160488.4.peg.5257"/>
<dbReference type="eggNOG" id="COG0422">
    <property type="taxonomic scope" value="Bacteria"/>
</dbReference>
<dbReference type="HOGENOM" id="CLU_013181_2_1_6"/>
<dbReference type="OrthoDB" id="9805897at2"/>
<dbReference type="PhylomeDB" id="Q88DA5"/>
<dbReference type="BioCyc" id="PPUT160488:G1G01-5264-MONOMER"/>
<dbReference type="UniPathway" id="UPA00060"/>
<dbReference type="Proteomes" id="UP000000556">
    <property type="component" value="Chromosome"/>
</dbReference>
<dbReference type="GO" id="GO:0005829">
    <property type="term" value="C:cytosol"/>
    <property type="evidence" value="ECO:0007669"/>
    <property type="project" value="TreeGrafter"/>
</dbReference>
<dbReference type="GO" id="GO:0051539">
    <property type="term" value="F:4 iron, 4 sulfur cluster binding"/>
    <property type="evidence" value="ECO:0007669"/>
    <property type="project" value="UniProtKB-KW"/>
</dbReference>
<dbReference type="GO" id="GO:0016830">
    <property type="term" value="F:carbon-carbon lyase activity"/>
    <property type="evidence" value="ECO:0007669"/>
    <property type="project" value="InterPro"/>
</dbReference>
<dbReference type="GO" id="GO:0008270">
    <property type="term" value="F:zinc ion binding"/>
    <property type="evidence" value="ECO:0007669"/>
    <property type="project" value="UniProtKB-UniRule"/>
</dbReference>
<dbReference type="GO" id="GO:0009228">
    <property type="term" value="P:thiamine biosynthetic process"/>
    <property type="evidence" value="ECO:0007669"/>
    <property type="project" value="UniProtKB-KW"/>
</dbReference>
<dbReference type="GO" id="GO:0009229">
    <property type="term" value="P:thiamine diphosphate biosynthetic process"/>
    <property type="evidence" value="ECO:0007669"/>
    <property type="project" value="UniProtKB-UniRule"/>
</dbReference>
<dbReference type="FunFam" id="3.20.20.540:FF:000001">
    <property type="entry name" value="Phosphomethylpyrimidine synthase"/>
    <property type="match status" value="1"/>
</dbReference>
<dbReference type="Gene3D" id="6.10.250.620">
    <property type="match status" value="1"/>
</dbReference>
<dbReference type="Gene3D" id="3.20.20.540">
    <property type="entry name" value="Radical SAM ThiC family, central domain"/>
    <property type="match status" value="1"/>
</dbReference>
<dbReference type="HAMAP" id="MF_00089">
    <property type="entry name" value="ThiC"/>
    <property type="match status" value="1"/>
</dbReference>
<dbReference type="InterPro" id="IPR037509">
    <property type="entry name" value="ThiC"/>
</dbReference>
<dbReference type="InterPro" id="IPR025747">
    <property type="entry name" value="ThiC-associated_dom"/>
</dbReference>
<dbReference type="InterPro" id="IPR038521">
    <property type="entry name" value="ThiC/Bza_core_dom"/>
</dbReference>
<dbReference type="InterPro" id="IPR002817">
    <property type="entry name" value="ThiC/BzaA/B"/>
</dbReference>
<dbReference type="NCBIfam" id="NF006763">
    <property type="entry name" value="PRK09284.1"/>
    <property type="match status" value="1"/>
</dbReference>
<dbReference type="NCBIfam" id="NF009895">
    <property type="entry name" value="PRK13352.1"/>
    <property type="match status" value="1"/>
</dbReference>
<dbReference type="NCBIfam" id="TIGR00190">
    <property type="entry name" value="thiC"/>
    <property type="match status" value="1"/>
</dbReference>
<dbReference type="PANTHER" id="PTHR30557:SF1">
    <property type="entry name" value="PHOSPHOMETHYLPYRIMIDINE SYNTHASE, CHLOROPLASTIC"/>
    <property type="match status" value="1"/>
</dbReference>
<dbReference type="PANTHER" id="PTHR30557">
    <property type="entry name" value="THIAMINE BIOSYNTHESIS PROTEIN THIC"/>
    <property type="match status" value="1"/>
</dbReference>
<dbReference type="Pfam" id="PF13667">
    <property type="entry name" value="ThiC-associated"/>
    <property type="match status" value="1"/>
</dbReference>
<dbReference type="Pfam" id="PF01964">
    <property type="entry name" value="ThiC_Rad_SAM"/>
    <property type="match status" value="1"/>
</dbReference>
<dbReference type="SFLD" id="SFLDF00407">
    <property type="entry name" value="phosphomethylpyrimidine_syntha"/>
    <property type="match status" value="1"/>
</dbReference>
<dbReference type="SFLD" id="SFLDG01114">
    <property type="entry name" value="phosphomethylpyrimidine_syntha"/>
    <property type="match status" value="1"/>
</dbReference>
<dbReference type="SFLD" id="SFLDS00113">
    <property type="entry name" value="Radical_SAM_Phosphomethylpyrim"/>
    <property type="match status" value="1"/>
</dbReference>
<organism>
    <name type="scientific">Pseudomonas putida (strain ATCC 47054 / DSM 6125 / CFBP 8728 / NCIMB 11950 / KT2440)</name>
    <dbReference type="NCBI Taxonomy" id="160488"/>
    <lineage>
        <taxon>Bacteria</taxon>
        <taxon>Pseudomonadati</taxon>
        <taxon>Pseudomonadota</taxon>
        <taxon>Gammaproteobacteria</taxon>
        <taxon>Pseudomonadales</taxon>
        <taxon>Pseudomonadaceae</taxon>
        <taxon>Pseudomonas</taxon>
    </lineage>
</organism>